<dbReference type="EMBL" id="AC006259">
    <property type="status" value="NOT_ANNOTATED_CDS"/>
    <property type="molecule type" value="Genomic_DNA"/>
</dbReference>
<dbReference type="EMBL" id="CP002688">
    <property type="protein sequence ID" value="AED93410.1"/>
    <property type="molecule type" value="Genomic_DNA"/>
</dbReference>
<dbReference type="EMBL" id="AY045659">
    <property type="protein sequence ID" value="AAK74017.1"/>
    <property type="molecule type" value="mRNA"/>
</dbReference>
<dbReference type="EMBL" id="AY059664">
    <property type="protein sequence ID" value="AAL31157.1"/>
    <property type="molecule type" value="mRNA"/>
</dbReference>
<dbReference type="SMR" id="Q94AW5"/>
<dbReference type="BioGRID" id="17865">
    <property type="interactions" value="21"/>
</dbReference>
<dbReference type="FunCoup" id="Q94AW5">
    <property type="interactions" value="77"/>
</dbReference>
<dbReference type="IntAct" id="Q94AW5">
    <property type="interactions" value="21"/>
</dbReference>
<dbReference type="STRING" id="3702.Q94AW5"/>
<dbReference type="PaxDb" id="3702-AT5G25190.1"/>
<dbReference type="ProteomicsDB" id="221808"/>
<dbReference type="EnsemblPlants" id="AT5G25190.1">
    <property type="protein sequence ID" value="AT5G25190.1"/>
    <property type="gene ID" value="AT5G25190"/>
</dbReference>
<dbReference type="GeneID" id="832590"/>
<dbReference type="Gramene" id="AT5G25190.1">
    <property type="protein sequence ID" value="AT5G25190.1"/>
    <property type="gene ID" value="AT5G25190"/>
</dbReference>
<dbReference type="KEGG" id="ath:AT5G25190"/>
<dbReference type="Araport" id="AT5G25190"/>
<dbReference type="TAIR" id="AT5G25190">
    <property type="gene designation" value="ESE3"/>
</dbReference>
<dbReference type="eggNOG" id="ENOG502RD02">
    <property type="taxonomic scope" value="Eukaryota"/>
</dbReference>
<dbReference type="HOGENOM" id="CLU_042594_3_1_1"/>
<dbReference type="InParanoid" id="Q94AW5"/>
<dbReference type="OMA" id="KCEDGNA"/>
<dbReference type="PhylomeDB" id="Q94AW5"/>
<dbReference type="PRO" id="PR:Q94AW5"/>
<dbReference type="Proteomes" id="UP000006548">
    <property type="component" value="Chromosome 5"/>
</dbReference>
<dbReference type="ExpressionAtlas" id="Q94AW5">
    <property type="expression patterns" value="baseline and differential"/>
</dbReference>
<dbReference type="GO" id="GO:0005634">
    <property type="term" value="C:nucleus"/>
    <property type="evidence" value="ECO:0007669"/>
    <property type="project" value="UniProtKB-SubCell"/>
</dbReference>
<dbReference type="GO" id="GO:0003677">
    <property type="term" value="F:DNA binding"/>
    <property type="evidence" value="ECO:0007669"/>
    <property type="project" value="UniProtKB-KW"/>
</dbReference>
<dbReference type="GO" id="GO:0003700">
    <property type="term" value="F:DNA-binding transcription factor activity"/>
    <property type="evidence" value="ECO:0000250"/>
    <property type="project" value="TAIR"/>
</dbReference>
<dbReference type="GO" id="GO:0009873">
    <property type="term" value="P:ethylene-activated signaling pathway"/>
    <property type="evidence" value="ECO:0000304"/>
    <property type="project" value="TAIR"/>
</dbReference>
<dbReference type="CDD" id="cd00018">
    <property type="entry name" value="AP2"/>
    <property type="match status" value="1"/>
</dbReference>
<dbReference type="FunFam" id="3.30.730.10:FF:000001">
    <property type="entry name" value="Ethylene-responsive transcription factor 2"/>
    <property type="match status" value="1"/>
</dbReference>
<dbReference type="Gene3D" id="3.30.730.10">
    <property type="entry name" value="AP2/ERF domain"/>
    <property type="match status" value="1"/>
</dbReference>
<dbReference type="InterPro" id="IPR001471">
    <property type="entry name" value="AP2/ERF_dom"/>
</dbReference>
<dbReference type="InterPro" id="IPR036955">
    <property type="entry name" value="AP2/ERF_dom_sf"/>
</dbReference>
<dbReference type="InterPro" id="IPR050913">
    <property type="entry name" value="AP2/ERF_ERF_subfamily"/>
</dbReference>
<dbReference type="InterPro" id="IPR016177">
    <property type="entry name" value="DNA-bd_dom_sf"/>
</dbReference>
<dbReference type="PANTHER" id="PTHR31194:SF61">
    <property type="entry name" value="ETHYLENE-RESPONSIVE TRANSCRIPTION FACTOR ERF003"/>
    <property type="match status" value="1"/>
</dbReference>
<dbReference type="PANTHER" id="PTHR31194">
    <property type="entry name" value="SHN SHINE , DNA BINDING / TRANSCRIPTION FACTOR"/>
    <property type="match status" value="1"/>
</dbReference>
<dbReference type="Pfam" id="PF00847">
    <property type="entry name" value="AP2"/>
    <property type="match status" value="1"/>
</dbReference>
<dbReference type="PRINTS" id="PR00367">
    <property type="entry name" value="ETHRSPELEMNT"/>
</dbReference>
<dbReference type="SMART" id="SM00380">
    <property type="entry name" value="AP2"/>
    <property type="match status" value="1"/>
</dbReference>
<dbReference type="SUPFAM" id="SSF54171">
    <property type="entry name" value="DNA-binding domain"/>
    <property type="match status" value="1"/>
</dbReference>
<dbReference type="PROSITE" id="PS51032">
    <property type="entry name" value="AP2_ERF"/>
    <property type="match status" value="1"/>
</dbReference>
<gene>
    <name type="primary">ERF003</name>
    <name type="ordered locus">At5g25190</name>
    <name type="ORF">F21J6.103</name>
</gene>
<reference key="1">
    <citation type="journal article" date="2000" name="Nature">
        <title>Sequence and analysis of chromosome 5 of the plant Arabidopsis thaliana.</title>
        <authorList>
            <person name="Tabata S."/>
            <person name="Kaneko T."/>
            <person name="Nakamura Y."/>
            <person name="Kotani H."/>
            <person name="Kato T."/>
            <person name="Asamizu E."/>
            <person name="Miyajima N."/>
            <person name="Sasamoto S."/>
            <person name="Kimura T."/>
            <person name="Hosouchi T."/>
            <person name="Kawashima K."/>
            <person name="Kohara M."/>
            <person name="Matsumoto M."/>
            <person name="Matsuno A."/>
            <person name="Muraki A."/>
            <person name="Nakayama S."/>
            <person name="Nakazaki N."/>
            <person name="Naruo K."/>
            <person name="Okumura S."/>
            <person name="Shinpo S."/>
            <person name="Takeuchi C."/>
            <person name="Wada T."/>
            <person name="Watanabe A."/>
            <person name="Yamada M."/>
            <person name="Yasuda M."/>
            <person name="Sato S."/>
            <person name="de la Bastide M."/>
            <person name="Huang E."/>
            <person name="Spiegel L."/>
            <person name="Gnoj L."/>
            <person name="O'Shaughnessy A."/>
            <person name="Preston R."/>
            <person name="Habermann K."/>
            <person name="Murray J."/>
            <person name="Johnson D."/>
            <person name="Rohlfing T."/>
            <person name="Nelson J."/>
            <person name="Stoneking T."/>
            <person name="Pepin K."/>
            <person name="Spieth J."/>
            <person name="Sekhon M."/>
            <person name="Armstrong J."/>
            <person name="Becker M."/>
            <person name="Belter E."/>
            <person name="Cordum H."/>
            <person name="Cordes M."/>
            <person name="Courtney L."/>
            <person name="Courtney W."/>
            <person name="Dante M."/>
            <person name="Du H."/>
            <person name="Edwards J."/>
            <person name="Fryman J."/>
            <person name="Haakensen B."/>
            <person name="Lamar E."/>
            <person name="Latreille P."/>
            <person name="Leonard S."/>
            <person name="Meyer R."/>
            <person name="Mulvaney E."/>
            <person name="Ozersky P."/>
            <person name="Riley A."/>
            <person name="Strowmatt C."/>
            <person name="Wagner-McPherson C."/>
            <person name="Wollam A."/>
            <person name="Yoakum M."/>
            <person name="Bell M."/>
            <person name="Dedhia N."/>
            <person name="Parnell L."/>
            <person name="Shah R."/>
            <person name="Rodriguez M."/>
            <person name="Hoon See L."/>
            <person name="Vil D."/>
            <person name="Baker J."/>
            <person name="Kirchoff K."/>
            <person name="Toth K."/>
            <person name="King L."/>
            <person name="Bahret A."/>
            <person name="Miller B."/>
            <person name="Marra M.A."/>
            <person name="Martienssen R."/>
            <person name="McCombie W.R."/>
            <person name="Wilson R.K."/>
            <person name="Murphy G."/>
            <person name="Bancroft I."/>
            <person name="Volckaert G."/>
            <person name="Wambutt R."/>
            <person name="Duesterhoeft A."/>
            <person name="Stiekema W."/>
            <person name="Pohl T."/>
            <person name="Entian K.-D."/>
            <person name="Terryn N."/>
            <person name="Hartley N."/>
            <person name="Bent E."/>
            <person name="Johnson S."/>
            <person name="Langham S.-A."/>
            <person name="McCullagh B."/>
            <person name="Robben J."/>
            <person name="Grymonprez B."/>
            <person name="Zimmermann W."/>
            <person name="Ramsperger U."/>
            <person name="Wedler H."/>
            <person name="Balke K."/>
            <person name="Wedler E."/>
            <person name="Peters S."/>
            <person name="van Staveren M."/>
            <person name="Dirkse W."/>
            <person name="Mooijman P."/>
            <person name="Klein Lankhorst R."/>
            <person name="Weitzenegger T."/>
            <person name="Bothe G."/>
            <person name="Rose M."/>
            <person name="Hauf J."/>
            <person name="Berneiser S."/>
            <person name="Hempel S."/>
            <person name="Feldpausch M."/>
            <person name="Lamberth S."/>
            <person name="Villarroel R."/>
            <person name="Gielen J."/>
            <person name="Ardiles W."/>
            <person name="Bents O."/>
            <person name="Lemcke K."/>
            <person name="Kolesov G."/>
            <person name="Mayer K.F.X."/>
            <person name="Rudd S."/>
            <person name="Schoof H."/>
            <person name="Schueller C."/>
            <person name="Zaccaria P."/>
            <person name="Mewes H.-W."/>
            <person name="Bevan M."/>
            <person name="Fransz P.F."/>
        </authorList>
    </citation>
    <scope>NUCLEOTIDE SEQUENCE [LARGE SCALE GENOMIC DNA]</scope>
    <source>
        <strain>cv. Columbia</strain>
    </source>
</reference>
<reference key="2">
    <citation type="journal article" date="2017" name="Plant J.">
        <title>Araport11: a complete reannotation of the Arabidopsis thaliana reference genome.</title>
        <authorList>
            <person name="Cheng C.Y."/>
            <person name="Krishnakumar V."/>
            <person name="Chan A.P."/>
            <person name="Thibaud-Nissen F."/>
            <person name="Schobel S."/>
            <person name="Town C.D."/>
        </authorList>
    </citation>
    <scope>GENOME REANNOTATION</scope>
    <source>
        <strain>cv. Columbia</strain>
    </source>
</reference>
<reference key="3">
    <citation type="journal article" date="2003" name="Science">
        <title>Empirical analysis of transcriptional activity in the Arabidopsis genome.</title>
        <authorList>
            <person name="Yamada K."/>
            <person name="Lim J."/>
            <person name="Dale J.M."/>
            <person name="Chen H."/>
            <person name="Shinn P."/>
            <person name="Palm C.J."/>
            <person name="Southwick A.M."/>
            <person name="Wu H.C."/>
            <person name="Kim C.J."/>
            <person name="Nguyen M."/>
            <person name="Pham P.K."/>
            <person name="Cheuk R.F."/>
            <person name="Karlin-Newmann G."/>
            <person name="Liu S.X."/>
            <person name="Lam B."/>
            <person name="Sakano H."/>
            <person name="Wu T."/>
            <person name="Yu G."/>
            <person name="Miranda M."/>
            <person name="Quach H.L."/>
            <person name="Tripp M."/>
            <person name="Chang C.H."/>
            <person name="Lee J.M."/>
            <person name="Toriumi M.J."/>
            <person name="Chan M.M."/>
            <person name="Tang C.C."/>
            <person name="Onodera C.S."/>
            <person name="Deng J.M."/>
            <person name="Akiyama K."/>
            <person name="Ansari Y."/>
            <person name="Arakawa T."/>
            <person name="Banh J."/>
            <person name="Banno F."/>
            <person name="Bowser L."/>
            <person name="Brooks S.Y."/>
            <person name="Carninci P."/>
            <person name="Chao Q."/>
            <person name="Choy N."/>
            <person name="Enju A."/>
            <person name="Goldsmith A.D."/>
            <person name="Gurjal M."/>
            <person name="Hansen N.F."/>
            <person name="Hayashizaki Y."/>
            <person name="Johnson-Hopson C."/>
            <person name="Hsuan V.W."/>
            <person name="Iida K."/>
            <person name="Karnes M."/>
            <person name="Khan S."/>
            <person name="Koesema E."/>
            <person name="Ishida J."/>
            <person name="Jiang P.X."/>
            <person name="Jones T."/>
            <person name="Kawai J."/>
            <person name="Kamiya A."/>
            <person name="Meyers C."/>
            <person name="Nakajima M."/>
            <person name="Narusaka M."/>
            <person name="Seki M."/>
            <person name="Sakurai T."/>
            <person name="Satou M."/>
            <person name="Tamse R."/>
            <person name="Vaysberg M."/>
            <person name="Wallender E.K."/>
            <person name="Wong C."/>
            <person name="Yamamura Y."/>
            <person name="Yuan S."/>
            <person name="Shinozaki K."/>
            <person name="Davis R.W."/>
            <person name="Theologis A."/>
            <person name="Ecker J.R."/>
        </authorList>
    </citation>
    <scope>NUCLEOTIDE SEQUENCE [LARGE SCALE MRNA]</scope>
    <source>
        <strain>cv. Columbia</strain>
    </source>
</reference>
<reference key="4">
    <citation type="journal article" date="2006" name="Plant Physiol.">
        <title>Genome-wide analysis of the ERF gene family in Arabidopsis and rice.</title>
        <authorList>
            <person name="Nakano T."/>
            <person name="Suzuki K."/>
            <person name="Fujimura T."/>
            <person name="Shinshi H."/>
        </authorList>
    </citation>
    <scope>GENE FAMILY</scope>
    <scope>NOMENCLATURE</scope>
</reference>
<accession>Q94AW5</accession>
<comment type="function">
    <text evidence="1">Probably acts as a transcriptional activator. Binds to the GCC-box pathogenesis-related promoter element. May be involved in the regulation of gene expression by stress factors and by components of stress signal transduction pathways (By similarity).</text>
</comment>
<comment type="interaction">
    <interactant intactId="EBI-15202166">
        <id>Q94AW5</id>
    </interactant>
    <interactant intactId="EBI-1748724">
        <id>Q2V452</id>
        <label>CIPK3</label>
    </interactant>
    <organismsDiffer>false</organismsDiffer>
    <experiments>3</experiments>
</comment>
<comment type="interaction">
    <interactant intactId="EBI-15202166">
        <id>Q94AW5</id>
    </interactant>
    <interactant intactId="EBI-25511270">
        <id>Q9FX36</id>
        <label>MYB54</label>
    </interactant>
    <organismsDiffer>false</organismsDiffer>
    <experiments>3</experiments>
</comment>
<comment type="subcellular location">
    <subcellularLocation>
        <location evidence="4">Nucleus</location>
    </subcellularLocation>
</comment>
<comment type="similarity">
    <text evidence="4">Belongs to the AP2/ERF transcription factor family. ERF subfamily.</text>
</comment>
<organism>
    <name type="scientific">Arabidopsis thaliana</name>
    <name type="common">Mouse-ear cress</name>
    <dbReference type="NCBI Taxonomy" id="3702"/>
    <lineage>
        <taxon>Eukaryota</taxon>
        <taxon>Viridiplantae</taxon>
        <taxon>Streptophyta</taxon>
        <taxon>Embryophyta</taxon>
        <taxon>Tracheophyta</taxon>
        <taxon>Spermatophyta</taxon>
        <taxon>Magnoliopsida</taxon>
        <taxon>eudicotyledons</taxon>
        <taxon>Gunneridae</taxon>
        <taxon>Pentapetalae</taxon>
        <taxon>rosids</taxon>
        <taxon>malvids</taxon>
        <taxon>Brassicales</taxon>
        <taxon>Brassicaceae</taxon>
        <taxon>Camelineae</taxon>
        <taxon>Arabidopsis</taxon>
    </lineage>
</organism>
<proteinExistence type="evidence at protein level"/>
<sequence length="181" mass="20606">MARPQQRFRGVRQRHWGSWVSEIRHPLLKTRIWLGTFETAEDAARAYDEAARLMCGPRARTNFPYNPNAIPTSSSKLLSATLTAKLHKCYMASLQMTKQTQTQTQTQTARSQSADSDGVTANESHLNRGVTETTEIKWEDGNANMQQNFRPLEEDHIEQMIEELLHYGSIELCSVLPTQTL</sequence>
<evidence type="ECO:0000250" key="1"/>
<evidence type="ECO:0000255" key="2">
    <source>
        <dbReference type="PROSITE-ProRule" id="PRU00366"/>
    </source>
</evidence>
<evidence type="ECO:0000256" key="3">
    <source>
        <dbReference type="SAM" id="MobiDB-lite"/>
    </source>
</evidence>
<evidence type="ECO:0000305" key="4"/>
<keyword id="KW-0010">Activator</keyword>
<keyword id="KW-0238">DNA-binding</keyword>
<keyword id="KW-0936">Ethylene signaling pathway</keyword>
<keyword id="KW-0539">Nucleus</keyword>
<keyword id="KW-1185">Reference proteome</keyword>
<keyword id="KW-0804">Transcription</keyword>
<keyword id="KW-0805">Transcription regulation</keyword>
<protein>
    <recommendedName>
        <fullName>Ethylene-responsive transcription factor ERF003</fullName>
    </recommendedName>
</protein>
<feature type="chain" id="PRO_0000290369" description="Ethylene-responsive transcription factor ERF003">
    <location>
        <begin position="1"/>
        <end position="181"/>
    </location>
</feature>
<feature type="DNA-binding region" description="AP2/ERF" evidence="2">
    <location>
        <begin position="7"/>
        <end position="64"/>
    </location>
</feature>
<feature type="region of interest" description="Disordered" evidence="3">
    <location>
        <begin position="101"/>
        <end position="133"/>
    </location>
</feature>
<feature type="compositionally biased region" description="Polar residues" evidence="3">
    <location>
        <begin position="109"/>
        <end position="124"/>
    </location>
</feature>
<name>ERF03_ARATH</name>